<sequence>MSKKWTRNTAAMAAILSALCLSTNALATSEQAVTDENQTTTQQEGMRFEPRNEKFAEAHAEQYKSWKATQESEEIEDALEGDPNMVVLWAGYGFSKDYNKARGHFYAITDVRETLRTGGPTDDKSGPMPMACWSCKSPDVARVIDDRGEDGYFEGKWARLGAEINNAIGCSDCHNTGSEEFAKGGPALQMSRPYAERAMETIGKKFEDQSRFDQQAQVCGQCHVEYYFTGPKKSVKFPWDKGTSVDDMEVYYDEIGFKDWTHGVSKAPMLKAQHPGYETWREGIHGKNNVTCIDCHMPKVQNEDGTVFTDHKVGNPFDRFEDTCAQCHTQTKAALKSVVATRKASVLEMKLRAEKQIIAAHFEAKAAWDAGATEAEMEPILMDIRHAQWRWDYAIASHGVHMHAPEVALRILGTALDKAGDARAKVIRLLATKGITEEIQIPDISTKVKAQQALGMDMNKMNAEKDEFLKTIVPEWDKQADAREAKY</sequence>
<dbReference type="EC" id="1.7.2.2" evidence="1"/>
<dbReference type="EMBL" id="CR378667">
    <property type="protein sequence ID" value="CAG19669.1"/>
    <property type="molecule type" value="Genomic_DNA"/>
</dbReference>
<dbReference type="RefSeq" id="WP_011217999.1">
    <property type="nucleotide sequence ID" value="NC_006370.1"/>
</dbReference>
<dbReference type="SMR" id="Q6LSQ7"/>
<dbReference type="STRING" id="298386.PBPRA1258"/>
<dbReference type="KEGG" id="ppr:PBPRA1258"/>
<dbReference type="eggNOG" id="COG3303">
    <property type="taxonomic scope" value="Bacteria"/>
</dbReference>
<dbReference type="HOGENOM" id="CLU_035040_1_0_6"/>
<dbReference type="UniPathway" id="UPA00653"/>
<dbReference type="Proteomes" id="UP000000593">
    <property type="component" value="Chromosome 1"/>
</dbReference>
<dbReference type="GO" id="GO:0030288">
    <property type="term" value="C:outer membrane-bounded periplasmic space"/>
    <property type="evidence" value="ECO:0007669"/>
    <property type="project" value="TreeGrafter"/>
</dbReference>
<dbReference type="GO" id="GO:0005509">
    <property type="term" value="F:calcium ion binding"/>
    <property type="evidence" value="ECO:0007669"/>
    <property type="project" value="UniProtKB-UniRule"/>
</dbReference>
<dbReference type="GO" id="GO:0020037">
    <property type="term" value="F:heme binding"/>
    <property type="evidence" value="ECO:0007669"/>
    <property type="project" value="InterPro"/>
</dbReference>
<dbReference type="GO" id="GO:0005506">
    <property type="term" value="F:iron ion binding"/>
    <property type="evidence" value="ECO:0007669"/>
    <property type="project" value="UniProtKB-UniRule"/>
</dbReference>
<dbReference type="GO" id="GO:0042279">
    <property type="term" value="F:nitrite reductase (cytochrome, ammonia-forming) activity"/>
    <property type="evidence" value="ECO:0007669"/>
    <property type="project" value="UniProtKB-UniRule"/>
</dbReference>
<dbReference type="GO" id="GO:0019645">
    <property type="term" value="P:anaerobic electron transport chain"/>
    <property type="evidence" value="ECO:0007669"/>
    <property type="project" value="TreeGrafter"/>
</dbReference>
<dbReference type="GO" id="GO:0042128">
    <property type="term" value="P:nitrate assimilation"/>
    <property type="evidence" value="ECO:0007669"/>
    <property type="project" value="UniProtKB-UniRule"/>
</dbReference>
<dbReference type="CDD" id="cd00548">
    <property type="entry name" value="NrfA-like"/>
    <property type="match status" value="1"/>
</dbReference>
<dbReference type="FunFam" id="1.10.1130.10:FF:000002">
    <property type="entry name" value="Cytochrome c-552"/>
    <property type="match status" value="1"/>
</dbReference>
<dbReference type="FunFam" id="1.20.140.10:FF:000014">
    <property type="entry name" value="Cytochrome c-552"/>
    <property type="match status" value="1"/>
</dbReference>
<dbReference type="Gene3D" id="1.20.140.10">
    <property type="entry name" value="Butyryl-CoA Dehydrogenase, subunit A, domain 3"/>
    <property type="match status" value="1"/>
</dbReference>
<dbReference type="Gene3D" id="1.10.1130.10">
    <property type="entry name" value="Flavocytochrome C3, Chain A"/>
    <property type="match status" value="1"/>
</dbReference>
<dbReference type="HAMAP" id="MF_01182">
    <property type="entry name" value="Cytochrom_C552"/>
    <property type="match status" value="1"/>
</dbReference>
<dbReference type="InterPro" id="IPR003321">
    <property type="entry name" value="Cyt_c552"/>
</dbReference>
<dbReference type="InterPro" id="IPR017570">
    <property type="entry name" value="Cyt_c_NO2Rdtase_formate-dep"/>
</dbReference>
<dbReference type="InterPro" id="IPR036280">
    <property type="entry name" value="Multihaem_cyt_sf"/>
</dbReference>
<dbReference type="NCBIfam" id="TIGR03152">
    <property type="entry name" value="cyto_c552_HCOOH"/>
    <property type="match status" value="1"/>
</dbReference>
<dbReference type="NCBIfam" id="NF008339">
    <property type="entry name" value="PRK11125.1"/>
    <property type="match status" value="1"/>
</dbReference>
<dbReference type="PANTHER" id="PTHR30633:SF0">
    <property type="entry name" value="CYTOCHROME C-552"/>
    <property type="match status" value="1"/>
</dbReference>
<dbReference type="PANTHER" id="PTHR30633">
    <property type="entry name" value="CYTOCHROME C-552 RESPIRATORY NITRITE REDUCTASE"/>
    <property type="match status" value="1"/>
</dbReference>
<dbReference type="Pfam" id="PF02335">
    <property type="entry name" value="Cytochrom_C552"/>
    <property type="match status" value="1"/>
</dbReference>
<dbReference type="PIRSF" id="PIRSF000243">
    <property type="entry name" value="Cyt_c552"/>
    <property type="match status" value="1"/>
</dbReference>
<dbReference type="SUPFAM" id="SSF48695">
    <property type="entry name" value="Multiheme cytochromes"/>
    <property type="match status" value="1"/>
</dbReference>
<dbReference type="PROSITE" id="PS51008">
    <property type="entry name" value="MULTIHEME_CYTC"/>
    <property type="match status" value="1"/>
</dbReference>
<proteinExistence type="inferred from homology"/>
<organism>
    <name type="scientific">Photobacterium profundum (strain SS9)</name>
    <dbReference type="NCBI Taxonomy" id="298386"/>
    <lineage>
        <taxon>Bacteria</taxon>
        <taxon>Pseudomonadati</taxon>
        <taxon>Pseudomonadota</taxon>
        <taxon>Gammaproteobacteria</taxon>
        <taxon>Vibrionales</taxon>
        <taxon>Vibrionaceae</taxon>
        <taxon>Photobacterium</taxon>
    </lineage>
</organism>
<accession>Q6LSQ7</accession>
<gene>
    <name evidence="1" type="primary">nrfA</name>
    <name type="ordered locus">PBPRA1258</name>
</gene>
<feature type="signal peptide" evidence="1">
    <location>
        <begin position="1"/>
        <end position="27"/>
    </location>
</feature>
<feature type="chain" id="PRO_0000268970" description="Cytochrome c-552">
    <location>
        <begin position="28"/>
        <end position="487"/>
    </location>
</feature>
<feature type="binding site" description="axial binding residue" evidence="1">
    <location>
        <position position="104"/>
    </location>
    <ligand>
        <name>heme c</name>
        <dbReference type="ChEBI" id="CHEBI:61717"/>
        <label>3</label>
    </ligand>
    <ligandPart>
        <name>Fe</name>
        <dbReference type="ChEBI" id="CHEBI:18248"/>
    </ligandPart>
</feature>
<feature type="binding site" description="covalent" evidence="1">
    <location>
        <position position="132"/>
    </location>
    <ligand>
        <name>heme</name>
        <dbReference type="ChEBI" id="CHEBI:30413"/>
        <label>1</label>
    </ligand>
</feature>
<feature type="binding site" description="covalent" evidence="1">
    <location>
        <position position="135"/>
    </location>
    <ligand>
        <name>heme</name>
        <dbReference type="ChEBI" id="CHEBI:30413"/>
        <label>1</label>
    </ligand>
</feature>
<feature type="binding site" description="axial binding residue" evidence="1">
    <location>
        <position position="136"/>
    </location>
    <ligand>
        <name>heme</name>
        <dbReference type="ChEBI" id="CHEBI:30413"/>
        <label>1</label>
    </ligand>
    <ligandPart>
        <name>Fe</name>
        <dbReference type="ChEBI" id="CHEBI:18248"/>
    </ligandPart>
</feature>
<feature type="binding site" description="covalent" evidence="1">
    <location>
        <position position="170"/>
    </location>
    <ligand>
        <name>heme c</name>
        <dbReference type="ChEBI" id="CHEBI:61717"/>
        <label>2</label>
    </ligand>
</feature>
<feature type="binding site" description="covalent" evidence="1">
    <location>
        <position position="173"/>
    </location>
    <ligand>
        <name>heme c</name>
        <dbReference type="ChEBI" id="CHEBI:61717"/>
        <label>2</label>
    </ligand>
</feature>
<feature type="binding site" description="axial binding residue" evidence="1">
    <location>
        <position position="174"/>
    </location>
    <ligand>
        <name>heme c</name>
        <dbReference type="ChEBI" id="CHEBI:61717"/>
        <label>2</label>
    </ligand>
    <ligandPart>
        <name>Fe</name>
        <dbReference type="ChEBI" id="CHEBI:18248"/>
    </ligandPart>
</feature>
<feature type="binding site" description="covalent" evidence="1">
    <location>
        <position position="219"/>
    </location>
    <ligand>
        <name>heme c</name>
        <dbReference type="ChEBI" id="CHEBI:61717"/>
        <label>3</label>
    </ligand>
</feature>
<feature type="binding site" description="covalent" evidence="1">
    <location>
        <position position="222"/>
    </location>
    <ligand>
        <name>heme c</name>
        <dbReference type="ChEBI" id="CHEBI:61717"/>
        <label>3</label>
    </ligand>
</feature>
<feature type="binding site" description="axial binding residue" evidence="1">
    <location>
        <position position="223"/>
    </location>
    <ligand>
        <name>heme c</name>
        <dbReference type="ChEBI" id="CHEBI:61717"/>
        <label>3</label>
    </ligand>
    <ligandPart>
        <name>Fe</name>
        <dbReference type="ChEBI" id="CHEBI:18248"/>
    </ligandPart>
</feature>
<feature type="binding site" evidence="1">
    <location>
        <position position="225"/>
    </location>
    <ligand>
        <name>Ca(2+)</name>
        <dbReference type="ChEBI" id="CHEBI:29108"/>
    </ligand>
</feature>
<feature type="binding site" evidence="1">
    <location>
        <position position="226"/>
    </location>
    <ligand>
        <name>Ca(2+)</name>
        <dbReference type="ChEBI" id="CHEBI:29108"/>
    </ligand>
</feature>
<feature type="binding site" evidence="1">
    <location>
        <position position="226"/>
    </location>
    <ligand>
        <name>substrate</name>
    </ligand>
</feature>
<feature type="binding site" evidence="1">
    <location>
        <position position="271"/>
    </location>
    <ligand>
        <name>Ca(2+)</name>
        <dbReference type="ChEBI" id="CHEBI:29108"/>
    </ligand>
</feature>
<feature type="binding site" evidence="1">
    <location>
        <position position="273"/>
    </location>
    <ligand>
        <name>Ca(2+)</name>
        <dbReference type="ChEBI" id="CHEBI:29108"/>
    </ligand>
</feature>
<feature type="binding site" evidence="1">
    <location>
        <position position="274"/>
    </location>
    <ligand>
        <name>substrate</name>
    </ligand>
</feature>
<feature type="binding site" description="axial binding residue" evidence="1">
    <location>
        <position position="285"/>
    </location>
    <ligand>
        <name>heme c</name>
        <dbReference type="ChEBI" id="CHEBI:61717"/>
        <label>5</label>
    </ligand>
    <ligandPart>
        <name>Fe</name>
        <dbReference type="ChEBI" id="CHEBI:18248"/>
    </ligandPart>
</feature>
<feature type="binding site" description="covalent" evidence="1">
    <location>
        <position position="292"/>
    </location>
    <ligand>
        <name>heme c</name>
        <dbReference type="ChEBI" id="CHEBI:61717"/>
        <label>4</label>
    </ligand>
</feature>
<feature type="binding site" description="covalent" evidence="1">
    <location>
        <position position="295"/>
    </location>
    <ligand>
        <name>heme c</name>
        <dbReference type="ChEBI" id="CHEBI:61717"/>
        <label>4</label>
    </ligand>
</feature>
<feature type="binding site" description="axial binding residue" evidence="1">
    <location>
        <position position="296"/>
    </location>
    <ligand>
        <name>heme c</name>
        <dbReference type="ChEBI" id="CHEBI:61717"/>
        <label>4</label>
    </ligand>
    <ligandPart>
        <name>Fe</name>
        <dbReference type="ChEBI" id="CHEBI:18248"/>
    </ligandPart>
</feature>
<feature type="binding site" description="axial binding residue" evidence="1">
    <location>
        <position position="311"/>
    </location>
    <ligand>
        <name>heme c</name>
        <dbReference type="ChEBI" id="CHEBI:61717"/>
        <label>2</label>
    </ligand>
    <ligandPart>
        <name>Fe</name>
        <dbReference type="ChEBI" id="CHEBI:18248"/>
    </ligandPart>
</feature>
<feature type="binding site" description="covalent" evidence="1">
    <location>
        <position position="324"/>
    </location>
    <ligand>
        <name>heme c</name>
        <dbReference type="ChEBI" id="CHEBI:61717"/>
        <label>5</label>
    </ligand>
</feature>
<feature type="binding site" description="covalent" evidence="1">
    <location>
        <position position="327"/>
    </location>
    <ligand>
        <name>heme c</name>
        <dbReference type="ChEBI" id="CHEBI:61717"/>
        <label>5</label>
    </ligand>
</feature>
<feature type="binding site" description="axial binding residue" evidence="1">
    <location>
        <position position="328"/>
    </location>
    <ligand>
        <name>heme c</name>
        <dbReference type="ChEBI" id="CHEBI:61717"/>
        <label>5</label>
    </ligand>
    <ligandPart>
        <name>Fe</name>
        <dbReference type="ChEBI" id="CHEBI:18248"/>
    </ligandPart>
</feature>
<feature type="binding site" description="axial binding residue" evidence="1">
    <location>
        <position position="403"/>
    </location>
    <ligand>
        <name>heme c</name>
        <dbReference type="ChEBI" id="CHEBI:61717"/>
        <label>4</label>
    </ligand>
    <ligandPart>
        <name>Fe</name>
        <dbReference type="ChEBI" id="CHEBI:18248"/>
    </ligandPart>
</feature>
<keyword id="KW-0106">Calcium</keyword>
<keyword id="KW-0249">Electron transport</keyword>
<keyword id="KW-0349">Heme</keyword>
<keyword id="KW-0408">Iron</keyword>
<keyword id="KW-0479">Metal-binding</keyword>
<keyword id="KW-0560">Oxidoreductase</keyword>
<keyword id="KW-0574">Periplasm</keyword>
<keyword id="KW-1185">Reference proteome</keyword>
<keyword id="KW-0732">Signal</keyword>
<keyword id="KW-0813">Transport</keyword>
<protein>
    <recommendedName>
        <fullName evidence="1">Cytochrome c-552</fullName>
        <ecNumber evidence="1">1.7.2.2</ecNumber>
    </recommendedName>
    <alternativeName>
        <fullName evidence="1">Ammonia-forming cytochrome c nitrite reductase</fullName>
        <shortName evidence="1">Cytochrome c nitrite reductase</shortName>
    </alternativeName>
</protein>
<name>NRFA_PHOPR</name>
<comment type="function">
    <text evidence="1">Catalyzes the reduction of nitrite to ammonia, consuming six electrons in the process.</text>
</comment>
<comment type="catalytic activity">
    <reaction evidence="1">
        <text>6 Fe(III)-[cytochrome c] + NH4(+) + 2 H2O = 6 Fe(II)-[cytochrome c] + nitrite + 8 H(+)</text>
        <dbReference type="Rhea" id="RHEA:13089"/>
        <dbReference type="Rhea" id="RHEA-COMP:10350"/>
        <dbReference type="Rhea" id="RHEA-COMP:14399"/>
        <dbReference type="ChEBI" id="CHEBI:15377"/>
        <dbReference type="ChEBI" id="CHEBI:15378"/>
        <dbReference type="ChEBI" id="CHEBI:16301"/>
        <dbReference type="ChEBI" id="CHEBI:28938"/>
        <dbReference type="ChEBI" id="CHEBI:29033"/>
        <dbReference type="ChEBI" id="CHEBI:29034"/>
        <dbReference type="EC" id="1.7.2.2"/>
    </reaction>
</comment>
<comment type="cofactor">
    <cofactor evidence="1">
        <name>Ca(2+)</name>
        <dbReference type="ChEBI" id="CHEBI:29108"/>
    </cofactor>
    <text evidence="1">Binds 1 Ca(2+) ion per monomer.</text>
</comment>
<comment type="cofactor">
    <cofactor evidence="1">
        <name>heme c</name>
        <dbReference type="ChEBI" id="CHEBI:61717"/>
    </cofactor>
    <text evidence="1">Binds 5 heme c groups covalently per monomer.</text>
</comment>
<comment type="pathway">
    <text evidence="1">Nitrogen metabolism; nitrate reduction (assimilation).</text>
</comment>
<comment type="subcellular location">
    <subcellularLocation>
        <location evidence="1">Periplasm</location>
    </subcellularLocation>
</comment>
<comment type="similarity">
    <text evidence="1">Belongs to the cytochrome c-552 family.</text>
</comment>
<reference key="1">
    <citation type="journal article" date="2005" name="Science">
        <title>Life at depth: Photobacterium profundum genome sequence and expression analysis.</title>
        <authorList>
            <person name="Vezzi A."/>
            <person name="Campanaro S."/>
            <person name="D'Angelo M."/>
            <person name="Simonato F."/>
            <person name="Vitulo N."/>
            <person name="Lauro F.M."/>
            <person name="Cestaro A."/>
            <person name="Malacrida G."/>
            <person name="Simionati B."/>
            <person name="Cannata N."/>
            <person name="Romualdi C."/>
            <person name="Bartlett D.H."/>
            <person name="Valle G."/>
        </authorList>
    </citation>
    <scope>NUCLEOTIDE SEQUENCE [LARGE SCALE GENOMIC DNA]</scope>
    <source>
        <strain>ATCC BAA-1253 / SS9</strain>
    </source>
</reference>
<evidence type="ECO:0000255" key="1">
    <source>
        <dbReference type="HAMAP-Rule" id="MF_01182"/>
    </source>
</evidence>